<reference key="1">
    <citation type="journal article" date="2004" name="Science">
        <title>Illuminating the evolutionary history of chlamydiae.</title>
        <authorList>
            <person name="Horn M."/>
            <person name="Collingro A."/>
            <person name="Schmitz-Esser S."/>
            <person name="Beier C.L."/>
            <person name="Purkhold U."/>
            <person name="Fartmann B."/>
            <person name="Brandt P."/>
            <person name="Nyakatura G.J."/>
            <person name="Droege M."/>
            <person name="Frishman D."/>
            <person name="Rattei T."/>
            <person name="Mewes H.-W."/>
            <person name="Wagner M."/>
        </authorList>
    </citation>
    <scope>NUCLEOTIDE SEQUENCE [LARGE SCALE GENOMIC DNA]</scope>
    <source>
        <strain>UWE25</strain>
    </source>
</reference>
<organism>
    <name type="scientific">Protochlamydia amoebophila (strain UWE25)</name>
    <dbReference type="NCBI Taxonomy" id="264201"/>
    <lineage>
        <taxon>Bacteria</taxon>
        <taxon>Pseudomonadati</taxon>
        <taxon>Chlamydiota</taxon>
        <taxon>Chlamydiia</taxon>
        <taxon>Parachlamydiales</taxon>
        <taxon>Parachlamydiaceae</taxon>
        <taxon>Candidatus Protochlamydia</taxon>
    </lineage>
</organism>
<proteinExistence type="inferred from homology"/>
<gene>
    <name evidence="1" type="primary">cysS</name>
    <name type="ordered locus">pc1235</name>
</gene>
<sequence length="478" mass="55042">MNEHALKNIPLRLYNTAERQKQELKPIKGNHIQLYTCGPTVYHYAHIGNFRTYIFEDLLRRTIQFFGFSITQVMNLTDVDDKTIRGAIAKGITLDEYTKPYKDAFFEDLKTLNIQSAEYYPAATDYIPAMIEMIKVLLDKKVAYKGGDGSIYYAINQFPRYGCLSHLHLEDLQAGASERVAADEYEKEHVADFVLWKSYDSERDGQIYWESPFGLGRPGWHLECSAMAMHLLGETIDIHVGGIDNMFPHHENEIAQSEACSGKKFVNLWMHAEHLVVDQKKMSKSLGNFYTLRDLLNKGFTGIQVRYLLLQTHYKTQLNFTFQGVESVKSSLQRLNDFIQRIYNIQTLQSDGQVDLLVNDALIRFAEALADDLNISSALAAIFDFVREINCLCDVNQVSQKEAETVINLMKKFDTILGVLTFDKREESIPVDLQEAFAKRQQARQEKNWTLSDELRDFIHQRGYLIEDTPQGTRLKKQ</sequence>
<evidence type="ECO:0000255" key="1">
    <source>
        <dbReference type="HAMAP-Rule" id="MF_00041"/>
    </source>
</evidence>
<feature type="chain" id="PRO_0000159450" description="Cysteine--tRNA ligase">
    <location>
        <begin position="1"/>
        <end position="478"/>
    </location>
</feature>
<feature type="short sequence motif" description="'HIGH' region">
    <location>
        <begin position="39"/>
        <end position="49"/>
    </location>
</feature>
<feature type="short sequence motif" description="'KMSKS' region">
    <location>
        <begin position="281"/>
        <end position="285"/>
    </location>
</feature>
<feature type="binding site" evidence="1">
    <location>
        <position position="37"/>
    </location>
    <ligand>
        <name>Zn(2+)</name>
        <dbReference type="ChEBI" id="CHEBI:29105"/>
    </ligand>
</feature>
<feature type="binding site" evidence="1">
    <location>
        <position position="224"/>
    </location>
    <ligand>
        <name>Zn(2+)</name>
        <dbReference type="ChEBI" id="CHEBI:29105"/>
    </ligand>
</feature>
<feature type="binding site" evidence="1">
    <location>
        <position position="249"/>
    </location>
    <ligand>
        <name>Zn(2+)</name>
        <dbReference type="ChEBI" id="CHEBI:29105"/>
    </ligand>
</feature>
<feature type="binding site" evidence="1">
    <location>
        <position position="253"/>
    </location>
    <ligand>
        <name>Zn(2+)</name>
        <dbReference type="ChEBI" id="CHEBI:29105"/>
    </ligand>
</feature>
<feature type="binding site" evidence="1">
    <location>
        <position position="284"/>
    </location>
    <ligand>
        <name>ATP</name>
        <dbReference type="ChEBI" id="CHEBI:30616"/>
    </ligand>
</feature>
<name>SYC_PARUW</name>
<dbReference type="EC" id="6.1.1.16" evidence="1"/>
<dbReference type="EMBL" id="BX908798">
    <property type="protein sequence ID" value="CAF23959.1"/>
    <property type="molecule type" value="Genomic_DNA"/>
</dbReference>
<dbReference type="RefSeq" id="WP_011175785.1">
    <property type="nucleotide sequence ID" value="NC_005861.2"/>
</dbReference>
<dbReference type="SMR" id="Q6MBU0"/>
<dbReference type="STRING" id="264201.pc1235"/>
<dbReference type="KEGG" id="pcu:PC_RS05950"/>
<dbReference type="eggNOG" id="COG0215">
    <property type="taxonomic scope" value="Bacteria"/>
</dbReference>
<dbReference type="HOGENOM" id="CLU_013528_0_1_0"/>
<dbReference type="OrthoDB" id="9815130at2"/>
<dbReference type="Proteomes" id="UP000000529">
    <property type="component" value="Chromosome"/>
</dbReference>
<dbReference type="GO" id="GO:0005829">
    <property type="term" value="C:cytosol"/>
    <property type="evidence" value="ECO:0007669"/>
    <property type="project" value="TreeGrafter"/>
</dbReference>
<dbReference type="GO" id="GO:0005524">
    <property type="term" value="F:ATP binding"/>
    <property type="evidence" value="ECO:0007669"/>
    <property type="project" value="UniProtKB-UniRule"/>
</dbReference>
<dbReference type="GO" id="GO:0004817">
    <property type="term" value="F:cysteine-tRNA ligase activity"/>
    <property type="evidence" value="ECO:0007669"/>
    <property type="project" value="UniProtKB-UniRule"/>
</dbReference>
<dbReference type="GO" id="GO:0008270">
    <property type="term" value="F:zinc ion binding"/>
    <property type="evidence" value="ECO:0007669"/>
    <property type="project" value="UniProtKB-UniRule"/>
</dbReference>
<dbReference type="GO" id="GO:0006423">
    <property type="term" value="P:cysteinyl-tRNA aminoacylation"/>
    <property type="evidence" value="ECO:0007669"/>
    <property type="project" value="UniProtKB-UniRule"/>
</dbReference>
<dbReference type="CDD" id="cd00672">
    <property type="entry name" value="CysRS_core"/>
    <property type="match status" value="1"/>
</dbReference>
<dbReference type="FunFam" id="3.40.50.620:FF:000130">
    <property type="entry name" value="Cysteine--tRNA ligase"/>
    <property type="match status" value="1"/>
</dbReference>
<dbReference type="Gene3D" id="1.20.120.1910">
    <property type="entry name" value="Cysteine-tRNA ligase, C-terminal anti-codon recognition domain"/>
    <property type="match status" value="1"/>
</dbReference>
<dbReference type="Gene3D" id="3.40.50.620">
    <property type="entry name" value="HUPs"/>
    <property type="match status" value="1"/>
</dbReference>
<dbReference type="HAMAP" id="MF_00041">
    <property type="entry name" value="Cys_tRNA_synth"/>
    <property type="match status" value="1"/>
</dbReference>
<dbReference type="InterPro" id="IPR015803">
    <property type="entry name" value="Cys-tRNA-ligase"/>
</dbReference>
<dbReference type="InterPro" id="IPR015273">
    <property type="entry name" value="Cys-tRNA-synt_Ia_DALR"/>
</dbReference>
<dbReference type="InterPro" id="IPR024909">
    <property type="entry name" value="Cys-tRNA/MSH_ligase"/>
</dbReference>
<dbReference type="InterPro" id="IPR014729">
    <property type="entry name" value="Rossmann-like_a/b/a_fold"/>
</dbReference>
<dbReference type="InterPro" id="IPR032678">
    <property type="entry name" value="tRNA-synt_1_cat_dom"/>
</dbReference>
<dbReference type="InterPro" id="IPR009080">
    <property type="entry name" value="tRNAsynth_Ia_anticodon-bd"/>
</dbReference>
<dbReference type="NCBIfam" id="TIGR00435">
    <property type="entry name" value="cysS"/>
    <property type="match status" value="1"/>
</dbReference>
<dbReference type="PANTHER" id="PTHR10890:SF3">
    <property type="entry name" value="CYSTEINE--TRNA LIGASE, CYTOPLASMIC"/>
    <property type="match status" value="1"/>
</dbReference>
<dbReference type="PANTHER" id="PTHR10890">
    <property type="entry name" value="CYSTEINYL-TRNA SYNTHETASE"/>
    <property type="match status" value="1"/>
</dbReference>
<dbReference type="Pfam" id="PF09190">
    <property type="entry name" value="DALR_2"/>
    <property type="match status" value="1"/>
</dbReference>
<dbReference type="Pfam" id="PF01406">
    <property type="entry name" value="tRNA-synt_1e"/>
    <property type="match status" value="1"/>
</dbReference>
<dbReference type="PRINTS" id="PR00983">
    <property type="entry name" value="TRNASYNTHCYS"/>
</dbReference>
<dbReference type="SMART" id="SM00840">
    <property type="entry name" value="DALR_2"/>
    <property type="match status" value="1"/>
</dbReference>
<dbReference type="SUPFAM" id="SSF47323">
    <property type="entry name" value="Anticodon-binding domain of a subclass of class I aminoacyl-tRNA synthetases"/>
    <property type="match status" value="1"/>
</dbReference>
<dbReference type="SUPFAM" id="SSF52374">
    <property type="entry name" value="Nucleotidylyl transferase"/>
    <property type="match status" value="1"/>
</dbReference>
<comment type="catalytic activity">
    <reaction evidence="1">
        <text>tRNA(Cys) + L-cysteine + ATP = L-cysteinyl-tRNA(Cys) + AMP + diphosphate</text>
        <dbReference type="Rhea" id="RHEA:17773"/>
        <dbReference type="Rhea" id="RHEA-COMP:9661"/>
        <dbReference type="Rhea" id="RHEA-COMP:9679"/>
        <dbReference type="ChEBI" id="CHEBI:30616"/>
        <dbReference type="ChEBI" id="CHEBI:33019"/>
        <dbReference type="ChEBI" id="CHEBI:35235"/>
        <dbReference type="ChEBI" id="CHEBI:78442"/>
        <dbReference type="ChEBI" id="CHEBI:78517"/>
        <dbReference type="ChEBI" id="CHEBI:456215"/>
        <dbReference type="EC" id="6.1.1.16"/>
    </reaction>
</comment>
<comment type="cofactor">
    <cofactor evidence="1">
        <name>Zn(2+)</name>
        <dbReference type="ChEBI" id="CHEBI:29105"/>
    </cofactor>
    <text evidence="1">Binds 1 zinc ion per subunit.</text>
</comment>
<comment type="subunit">
    <text evidence="1">Monomer.</text>
</comment>
<comment type="subcellular location">
    <subcellularLocation>
        <location evidence="1">Cytoplasm</location>
    </subcellularLocation>
</comment>
<comment type="similarity">
    <text evidence="1">Belongs to the class-I aminoacyl-tRNA synthetase family.</text>
</comment>
<accession>Q6MBU0</accession>
<protein>
    <recommendedName>
        <fullName evidence="1">Cysteine--tRNA ligase</fullName>
        <ecNumber evidence="1">6.1.1.16</ecNumber>
    </recommendedName>
    <alternativeName>
        <fullName evidence="1">Cysteinyl-tRNA synthetase</fullName>
        <shortName evidence="1">CysRS</shortName>
    </alternativeName>
</protein>
<keyword id="KW-0030">Aminoacyl-tRNA synthetase</keyword>
<keyword id="KW-0067">ATP-binding</keyword>
<keyword id="KW-0963">Cytoplasm</keyword>
<keyword id="KW-0436">Ligase</keyword>
<keyword id="KW-0479">Metal-binding</keyword>
<keyword id="KW-0547">Nucleotide-binding</keyword>
<keyword id="KW-0648">Protein biosynthesis</keyword>
<keyword id="KW-1185">Reference proteome</keyword>
<keyword id="KW-0862">Zinc</keyword>